<name>RL17_BURCH</name>
<dbReference type="EMBL" id="CP000458">
    <property type="protein sequence ID" value="ABK07129.1"/>
    <property type="molecule type" value="Genomic_DNA"/>
</dbReference>
<dbReference type="RefSeq" id="WP_006477175.1">
    <property type="nucleotide sequence ID" value="NC_008542.1"/>
</dbReference>
<dbReference type="SMR" id="A0K3Q2"/>
<dbReference type="GeneID" id="98107133"/>
<dbReference type="KEGG" id="bch:Bcen2424_0375"/>
<dbReference type="HOGENOM" id="CLU_074407_2_0_4"/>
<dbReference type="GO" id="GO:0022625">
    <property type="term" value="C:cytosolic large ribosomal subunit"/>
    <property type="evidence" value="ECO:0007669"/>
    <property type="project" value="TreeGrafter"/>
</dbReference>
<dbReference type="GO" id="GO:0003735">
    <property type="term" value="F:structural constituent of ribosome"/>
    <property type="evidence" value="ECO:0007669"/>
    <property type="project" value="InterPro"/>
</dbReference>
<dbReference type="GO" id="GO:0006412">
    <property type="term" value="P:translation"/>
    <property type="evidence" value="ECO:0007669"/>
    <property type="project" value="UniProtKB-UniRule"/>
</dbReference>
<dbReference type="FunFam" id="3.90.1030.10:FF:000001">
    <property type="entry name" value="50S ribosomal protein L17"/>
    <property type="match status" value="1"/>
</dbReference>
<dbReference type="Gene3D" id="3.90.1030.10">
    <property type="entry name" value="Ribosomal protein L17"/>
    <property type="match status" value="1"/>
</dbReference>
<dbReference type="HAMAP" id="MF_01368">
    <property type="entry name" value="Ribosomal_bL17"/>
    <property type="match status" value="1"/>
</dbReference>
<dbReference type="InterPro" id="IPR000456">
    <property type="entry name" value="Ribosomal_bL17"/>
</dbReference>
<dbReference type="InterPro" id="IPR047859">
    <property type="entry name" value="Ribosomal_bL17_CS"/>
</dbReference>
<dbReference type="InterPro" id="IPR036373">
    <property type="entry name" value="Ribosomal_bL17_sf"/>
</dbReference>
<dbReference type="NCBIfam" id="TIGR00059">
    <property type="entry name" value="L17"/>
    <property type="match status" value="1"/>
</dbReference>
<dbReference type="PANTHER" id="PTHR14413:SF16">
    <property type="entry name" value="LARGE RIBOSOMAL SUBUNIT PROTEIN BL17M"/>
    <property type="match status" value="1"/>
</dbReference>
<dbReference type="PANTHER" id="PTHR14413">
    <property type="entry name" value="RIBOSOMAL PROTEIN L17"/>
    <property type="match status" value="1"/>
</dbReference>
<dbReference type="Pfam" id="PF01196">
    <property type="entry name" value="Ribosomal_L17"/>
    <property type="match status" value="1"/>
</dbReference>
<dbReference type="SUPFAM" id="SSF64263">
    <property type="entry name" value="Prokaryotic ribosomal protein L17"/>
    <property type="match status" value="1"/>
</dbReference>
<dbReference type="PROSITE" id="PS01167">
    <property type="entry name" value="RIBOSOMAL_L17"/>
    <property type="match status" value="1"/>
</dbReference>
<keyword id="KW-0687">Ribonucleoprotein</keyword>
<keyword id="KW-0689">Ribosomal protein</keyword>
<proteinExistence type="inferred from homology"/>
<gene>
    <name evidence="1" type="primary">rplQ</name>
    <name type="ordered locus">Bcen2424_0375</name>
</gene>
<feature type="chain" id="PRO_1000055782" description="Large ribosomal subunit protein bL17">
    <location>
        <begin position="1"/>
        <end position="131"/>
    </location>
</feature>
<protein>
    <recommendedName>
        <fullName evidence="1">Large ribosomal subunit protein bL17</fullName>
    </recommendedName>
    <alternativeName>
        <fullName evidence="2">50S ribosomal protein L17</fullName>
    </alternativeName>
</protein>
<sequence length="131" mass="15050">MRHRHGLRKLNRTSSHRLAMLRNMSNSLIEHEVIKTTLPKAKELRKVVEPLITLGKKPSLANRRLAFNRLRDRDSVAKLFDVLGPRFANRPGGYLRVLKFGFRVGDNAPMALVELLDRPEVDETENVQEAE</sequence>
<evidence type="ECO:0000255" key="1">
    <source>
        <dbReference type="HAMAP-Rule" id="MF_01368"/>
    </source>
</evidence>
<evidence type="ECO:0000305" key="2"/>
<accession>A0K3Q2</accession>
<comment type="subunit">
    <text evidence="1">Part of the 50S ribosomal subunit. Contacts protein L32.</text>
</comment>
<comment type="similarity">
    <text evidence="1">Belongs to the bacterial ribosomal protein bL17 family.</text>
</comment>
<reference key="1">
    <citation type="submission" date="2006-08" db="EMBL/GenBank/DDBJ databases">
        <title>Complete sequence of chromosome 1 of Burkholderia cenocepacia HI2424.</title>
        <authorList>
            <person name="Copeland A."/>
            <person name="Lucas S."/>
            <person name="Lapidus A."/>
            <person name="Barry K."/>
            <person name="Detter J.C."/>
            <person name="Glavina del Rio T."/>
            <person name="Hammon N."/>
            <person name="Israni S."/>
            <person name="Pitluck S."/>
            <person name="Chain P."/>
            <person name="Malfatti S."/>
            <person name="Shin M."/>
            <person name="Vergez L."/>
            <person name="Schmutz J."/>
            <person name="Larimer F."/>
            <person name="Land M."/>
            <person name="Hauser L."/>
            <person name="Kyrpides N."/>
            <person name="Kim E."/>
            <person name="LiPuma J.J."/>
            <person name="Gonzalez C.F."/>
            <person name="Konstantinidis K."/>
            <person name="Tiedje J.M."/>
            <person name="Richardson P."/>
        </authorList>
    </citation>
    <scope>NUCLEOTIDE SEQUENCE [LARGE SCALE GENOMIC DNA]</scope>
    <source>
        <strain>HI2424</strain>
    </source>
</reference>
<organism>
    <name type="scientific">Burkholderia cenocepacia (strain HI2424)</name>
    <dbReference type="NCBI Taxonomy" id="331272"/>
    <lineage>
        <taxon>Bacteria</taxon>
        <taxon>Pseudomonadati</taxon>
        <taxon>Pseudomonadota</taxon>
        <taxon>Betaproteobacteria</taxon>
        <taxon>Burkholderiales</taxon>
        <taxon>Burkholderiaceae</taxon>
        <taxon>Burkholderia</taxon>
        <taxon>Burkholderia cepacia complex</taxon>
    </lineage>
</organism>